<dbReference type="EC" id="5.4.99.9" evidence="3"/>
<dbReference type="EMBL" id="U96128">
    <property type="protein sequence ID" value="AAC46190.1"/>
    <property type="molecule type" value="Genomic_DNA"/>
</dbReference>
<dbReference type="EMBL" id="AF026540">
    <property type="protein sequence ID" value="AAC69358.1"/>
    <property type="molecule type" value="Genomic_DNA"/>
</dbReference>
<dbReference type="EMBL" id="AL123456">
    <property type="protein sequence ID" value="CCP46638.1"/>
    <property type="molecule type" value="Genomic_DNA"/>
</dbReference>
<dbReference type="PIR" id="E70888">
    <property type="entry name" value="E70888"/>
</dbReference>
<dbReference type="RefSeq" id="NP_218326.1">
    <property type="nucleotide sequence ID" value="NC_000962.3"/>
</dbReference>
<dbReference type="RefSeq" id="WP_003420798.1">
    <property type="nucleotide sequence ID" value="NZ_NVQJ01000022.1"/>
</dbReference>
<dbReference type="PDB" id="1V0J">
    <property type="method" value="X-ray"/>
    <property type="resolution" value="2.25 A"/>
    <property type="chains" value="A/B/C/D=1-399"/>
</dbReference>
<dbReference type="PDB" id="4RPG">
    <property type="method" value="X-ray"/>
    <property type="resolution" value="2.40 A"/>
    <property type="chains" value="A/B/C=1-399"/>
</dbReference>
<dbReference type="PDB" id="4RPH">
    <property type="method" value="X-ray"/>
    <property type="resolution" value="2.60 A"/>
    <property type="chains" value="A/B/C=1-399"/>
</dbReference>
<dbReference type="PDB" id="4RPJ">
    <property type="method" value="X-ray"/>
    <property type="resolution" value="2.50 A"/>
    <property type="chains" value="A/B/C=1-399"/>
</dbReference>
<dbReference type="PDB" id="4RPK">
    <property type="method" value="X-ray"/>
    <property type="resolution" value="2.55 A"/>
    <property type="chains" value="A/B/C=1-399"/>
</dbReference>
<dbReference type="PDB" id="4RPL">
    <property type="method" value="X-ray"/>
    <property type="resolution" value="2.25 A"/>
    <property type="chains" value="A/B/C=1-399"/>
</dbReference>
<dbReference type="PDBsum" id="1V0J"/>
<dbReference type="PDBsum" id="4RPG"/>
<dbReference type="PDBsum" id="4RPH"/>
<dbReference type="PDBsum" id="4RPJ"/>
<dbReference type="PDBsum" id="4RPK"/>
<dbReference type="PDBsum" id="4RPL"/>
<dbReference type="SMR" id="P9WIQ1"/>
<dbReference type="FunCoup" id="P9WIQ1">
    <property type="interactions" value="38"/>
</dbReference>
<dbReference type="STRING" id="83332.Rv3809c"/>
<dbReference type="BindingDB" id="P9WIQ1"/>
<dbReference type="ChEMBL" id="CHEMBL4450"/>
<dbReference type="DrugBank" id="DB03709">
    <property type="generic name" value="Bicine"/>
</dbReference>
<dbReference type="DrugBank" id="DB03147">
    <property type="generic name" value="Flavin adenine dinucleotide"/>
</dbReference>
<dbReference type="DrugCentral" id="P9WIQ1"/>
<dbReference type="PaxDb" id="83332-Rv3809c"/>
<dbReference type="DNASU" id="886142"/>
<dbReference type="GeneID" id="886142"/>
<dbReference type="KEGG" id="mtu:Rv3809c"/>
<dbReference type="KEGG" id="mtv:RVBD_3809c"/>
<dbReference type="PATRIC" id="fig|83332.111.peg.4234"/>
<dbReference type="TubercuList" id="Rv3809c"/>
<dbReference type="eggNOG" id="COG0562">
    <property type="taxonomic scope" value="Bacteria"/>
</dbReference>
<dbReference type="InParanoid" id="P9WIQ1"/>
<dbReference type="OrthoDB" id="9769600at2"/>
<dbReference type="PhylomeDB" id="P9WIQ1"/>
<dbReference type="BioCyc" id="MetaCyc:G185E-8105-MONOMER"/>
<dbReference type="BRENDA" id="5.4.99.9">
    <property type="organism ID" value="3445"/>
</dbReference>
<dbReference type="UniPathway" id="UPA00963"/>
<dbReference type="EvolutionaryTrace" id="P9WIQ1"/>
<dbReference type="PRO" id="PR:P9WIQ1"/>
<dbReference type="Proteomes" id="UP000001584">
    <property type="component" value="Chromosome"/>
</dbReference>
<dbReference type="GO" id="GO:0005829">
    <property type="term" value="C:cytosol"/>
    <property type="evidence" value="ECO:0000318"/>
    <property type="project" value="GO_Central"/>
</dbReference>
<dbReference type="GO" id="GO:0009274">
    <property type="term" value="C:peptidoglycan-based cell wall"/>
    <property type="evidence" value="ECO:0007005"/>
    <property type="project" value="MTBBASE"/>
</dbReference>
<dbReference type="GO" id="GO:0005886">
    <property type="term" value="C:plasma membrane"/>
    <property type="evidence" value="ECO:0007005"/>
    <property type="project" value="MTBBASE"/>
</dbReference>
<dbReference type="GO" id="GO:0050660">
    <property type="term" value="F:flavin adenine dinucleotide binding"/>
    <property type="evidence" value="ECO:0000318"/>
    <property type="project" value="GO_Central"/>
</dbReference>
<dbReference type="GO" id="GO:0008767">
    <property type="term" value="F:UDP-galactopyranose mutase activity"/>
    <property type="evidence" value="ECO:0000314"/>
    <property type="project" value="MTBBASE"/>
</dbReference>
<dbReference type="GO" id="GO:0071766">
    <property type="term" value="P:Actinobacterium-type cell wall biogenesis"/>
    <property type="evidence" value="ECO:0000314"/>
    <property type="project" value="MTBBASE"/>
</dbReference>
<dbReference type="GO" id="GO:0045227">
    <property type="term" value="P:capsule polysaccharide biosynthetic process"/>
    <property type="evidence" value="ECO:0007669"/>
    <property type="project" value="UniProtKB-UniPathway"/>
</dbReference>
<dbReference type="GO" id="GO:0071555">
    <property type="term" value="P:cell wall organization"/>
    <property type="evidence" value="ECO:0007669"/>
    <property type="project" value="UniProtKB-KW"/>
</dbReference>
<dbReference type="FunFam" id="3.40.50.720:FF:000354">
    <property type="entry name" value="UDP-galactopyranose mutase"/>
    <property type="match status" value="1"/>
</dbReference>
<dbReference type="FunFam" id="3.40.50.720:FF:000397">
    <property type="entry name" value="UDP-galactopyranose mutase"/>
    <property type="match status" value="1"/>
</dbReference>
<dbReference type="FunFam" id="3.40.50.720:FF:000422">
    <property type="entry name" value="UDP-galactopyranose mutase"/>
    <property type="match status" value="1"/>
</dbReference>
<dbReference type="Gene3D" id="3.40.50.720">
    <property type="entry name" value="NAD(P)-binding Rossmann-like Domain"/>
    <property type="match status" value="3"/>
</dbReference>
<dbReference type="InterPro" id="IPR004379">
    <property type="entry name" value="UDP-GALP_mutase"/>
</dbReference>
<dbReference type="InterPro" id="IPR015899">
    <property type="entry name" value="UDP-GalPyranose_mutase_C"/>
</dbReference>
<dbReference type="NCBIfam" id="TIGR00031">
    <property type="entry name" value="UDP-GALP_mutase"/>
    <property type="match status" value="1"/>
</dbReference>
<dbReference type="PANTHER" id="PTHR21197">
    <property type="entry name" value="UDP-GALACTOPYRANOSE MUTASE"/>
    <property type="match status" value="1"/>
</dbReference>
<dbReference type="PANTHER" id="PTHR21197:SF0">
    <property type="entry name" value="UDP-GALACTOPYRANOSE MUTASE"/>
    <property type="match status" value="1"/>
</dbReference>
<dbReference type="Pfam" id="PF03275">
    <property type="entry name" value="GLF"/>
    <property type="match status" value="1"/>
</dbReference>
<dbReference type="Pfam" id="PF13450">
    <property type="entry name" value="NAD_binding_8"/>
    <property type="match status" value="1"/>
</dbReference>
<dbReference type="SUPFAM" id="SSF54373">
    <property type="entry name" value="FAD-linked reductases, C-terminal domain"/>
    <property type="match status" value="1"/>
</dbReference>
<dbReference type="SUPFAM" id="SSF51971">
    <property type="entry name" value="Nucleotide-binding domain"/>
    <property type="match status" value="1"/>
</dbReference>
<name>GLF_MYCTU</name>
<evidence type="ECO:0000250" key="1"/>
<evidence type="ECO:0000269" key="2">
    <source>
    </source>
</evidence>
<evidence type="ECO:0000269" key="3">
    <source>
    </source>
</evidence>
<evidence type="ECO:0000303" key="4">
    <source>
    </source>
</evidence>
<evidence type="ECO:0000305" key="5"/>
<evidence type="ECO:0000305" key="6">
    <source>
    </source>
</evidence>
<evidence type="ECO:0007829" key="7">
    <source>
        <dbReference type="PDB" id="1V0J"/>
    </source>
</evidence>
<evidence type="ECO:0007829" key="8">
    <source>
        <dbReference type="PDB" id="4RPG"/>
    </source>
</evidence>
<evidence type="ECO:0007829" key="9">
    <source>
        <dbReference type="PDB" id="4RPL"/>
    </source>
</evidence>
<gene>
    <name evidence="4" type="primary">glf</name>
    <name type="ordered locus">Rv3809c</name>
</gene>
<feature type="chain" id="PRO_0000420735" description="UDP-galactopyranose mutase">
    <location>
        <begin position="1"/>
        <end position="399"/>
    </location>
</feature>
<feature type="binding site" evidence="2">
    <location>
        <position position="18"/>
    </location>
    <ligand>
        <name>FAD</name>
        <dbReference type="ChEBI" id="CHEBI:57692"/>
    </ligand>
</feature>
<feature type="binding site" evidence="2">
    <location>
        <position position="38"/>
    </location>
    <ligand>
        <name>FAD</name>
        <dbReference type="ChEBI" id="CHEBI:57692"/>
    </ligand>
</feature>
<feature type="binding site" evidence="2">
    <location>
        <position position="46"/>
    </location>
    <ligand>
        <name>FAD</name>
        <dbReference type="ChEBI" id="CHEBI:57692"/>
    </ligand>
</feature>
<feature type="binding site" evidence="2">
    <location>
        <position position="66"/>
    </location>
    <ligand>
        <name>FAD</name>
        <dbReference type="ChEBI" id="CHEBI:57692"/>
    </ligand>
</feature>
<feature type="binding site" evidence="1">
    <location>
        <position position="157"/>
    </location>
    <ligand>
        <name>UDP-alpha-D-galactose</name>
        <dbReference type="ChEBI" id="CHEBI:66914"/>
    </ligand>
</feature>
<feature type="binding site" evidence="1">
    <location>
        <position position="162"/>
    </location>
    <ligand>
        <name>UDP-alpha-D-galactose</name>
        <dbReference type="ChEBI" id="CHEBI:66914"/>
    </ligand>
</feature>
<feature type="binding site" evidence="1">
    <location>
        <position position="166"/>
    </location>
    <ligand>
        <name>UDP-alpha-D-galactose</name>
        <dbReference type="ChEBI" id="CHEBI:66914"/>
    </ligand>
</feature>
<feature type="binding site" evidence="1">
    <location>
        <position position="191"/>
    </location>
    <ligand>
        <name>UDP-alpha-D-galactose</name>
        <dbReference type="ChEBI" id="CHEBI:66914"/>
    </ligand>
</feature>
<feature type="binding site" evidence="2">
    <location>
        <begin position="224"/>
        <end position="225"/>
    </location>
    <ligand>
        <name>FAD</name>
        <dbReference type="ChEBI" id="CHEBI:57692"/>
    </ligand>
</feature>
<feature type="binding site" evidence="1">
    <location>
        <position position="282"/>
    </location>
    <ligand>
        <name>UDP-alpha-D-galactose</name>
        <dbReference type="ChEBI" id="CHEBI:66914"/>
    </ligand>
</feature>
<feature type="binding site" evidence="1">
    <location>
        <position position="292"/>
    </location>
    <ligand>
        <name>UDP-alpha-D-galactose</name>
        <dbReference type="ChEBI" id="CHEBI:66914"/>
    </ligand>
</feature>
<feature type="binding site" evidence="1">
    <location>
        <position position="328"/>
    </location>
    <ligand>
        <name>UDP-alpha-D-galactose</name>
        <dbReference type="ChEBI" id="CHEBI:66914"/>
    </ligand>
</feature>
<feature type="binding site" evidence="2">
    <location>
        <position position="360"/>
    </location>
    <ligand>
        <name>FAD</name>
        <dbReference type="ChEBI" id="CHEBI:57692"/>
    </ligand>
</feature>
<feature type="binding site" evidence="1">
    <location>
        <position position="366"/>
    </location>
    <ligand>
        <name>UDP-alpha-D-galactose</name>
        <dbReference type="ChEBI" id="CHEBI:66914"/>
    </ligand>
</feature>
<feature type="binding site" evidence="2">
    <location>
        <begin position="367"/>
        <end position="369"/>
    </location>
    <ligand>
        <name>FAD</name>
        <dbReference type="ChEBI" id="CHEBI:57692"/>
    </ligand>
</feature>
<feature type="strand" evidence="9">
    <location>
        <begin position="9"/>
        <end position="13"/>
    </location>
</feature>
<feature type="helix" evidence="9">
    <location>
        <begin position="17"/>
        <end position="29"/>
    </location>
</feature>
<feature type="strand" evidence="9">
    <location>
        <begin position="34"/>
        <end position="37"/>
    </location>
</feature>
<feature type="strand" evidence="9">
    <location>
        <begin position="39"/>
        <end position="44"/>
    </location>
</feature>
<feature type="helix" evidence="9">
    <location>
        <begin position="45"/>
        <end position="47"/>
    </location>
</feature>
<feature type="strand" evidence="9">
    <location>
        <begin position="49"/>
        <end position="51"/>
    </location>
</feature>
<feature type="turn" evidence="9">
    <location>
        <begin position="53"/>
        <end position="55"/>
    </location>
</feature>
<feature type="strand" evidence="9">
    <location>
        <begin position="58"/>
        <end position="60"/>
    </location>
</feature>
<feature type="strand" evidence="9">
    <location>
        <begin position="67"/>
        <end position="69"/>
    </location>
</feature>
<feature type="helix" evidence="9">
    <location>
        <begin position="72"/>
        <end position="78"/>
    </location>
</feature>
<feature type="turn" evidence="9">
    <location>
        <begin position="79"/>
        <end position="81"/>
    </location>
</feature>
<feature type="strand" evidence="9">
    <location>
        <begin position="91"/>
        <end position="95"/>
    </location>
</feature>
<feature type="strand" evidence="9">
    <location>
        <begin position="98"/>
        <end position="101"/>
    </location>
</feature>
<feature type="strand" evidence="9">
    <location>
        <begin position="103"/>
        <end position="105"/>
    </location>
</feature>
<feature type="helix" evidence="9">
    <location>
        <begin position="106"/>
        <end position="113"/>
    </location>
</feature>
<feature type="helix" evidence="9">
    <location>
        <begin position="119"/>
        <end position="129"/>
    </location>
</feature>
<feature type="turn" evidence="9">
    <location>
        <begin position="130"/>
        <end position="132"/>
    </location>
</feature>
<feature type="helix" evidence="9">
    <location>
        <begin position="135"/>
        <end position="137"/>
    </location>
</feature>
<feature type="helix" evidence="9">
    <location>
        <begin position="141"/>
        <end position="149"/>
    </location>
</feature>
<feature type="helix" evidence="9">
    <location>
        <begin position="151"/>
        <end position="157"/>
    </location>
</feature>
<feature type="helix" evidence="9">
    <location>
        <begin position="159"/>
        <end position="166"/>
    </location>
</feature>
<feature type="helix" evidence="7">
    <location>
        <begin position="170"/>
        <end position="172"/>
    </location>
</feature>
<feature type="helix" evidence="9">
    <location>
        <begin position="175"/>
        <end position="177"/>
    </location>
</feature>
<feature type="turn" evidence="9">
    <location>
        <begin position="178"/>
        <end position="180"/>
    </location>
</feature>
<feature type="strand" evidence="9">
    <location>
        <begin position="185"/>
        <end position="187"/>
    </location>
</feature>
<feature type="strand" evidence="9">
    <location>
        <begin position="195"/>
        <end position="198"/>
    </location>
</feature>
<feature type="helix" evidence="9">
    <location>
        <begin position="204"/>
        <end position="211"/>
    </location>
</feature>
<feature type="strand" evidence="9">
    <location>
        <begin position="217"/>
        <end position="220"/>
    </location>
</feature>
<feature type="helix" evidence="9">
    <location>
        <begin position="225"/>
        <end position="235"/>
    </location>
</feature>
<feature type="strand" evidence="9">
    <location>
        <begin position="241"/>
        <end position="243"/>
    </location>
</feature>
<feature type="helix" evidence="9">
    <location>
        <begin position="247"/>
        <end position="250"/>
    </location>
</feature>
<feature type="turn" evidence="9">
    <location>
        <begin position="251"/>
        <end position="253"/>
    </location>
</feature>
<feature type="strand" evidence="9">
    <location>
        <begin position="260"/>
        <end position="273"/>
    </location>
</feature>
<feature type="strand" evidence="9">
    <location>
        <begin position="275"/>
        <end position="283"/>
    </location>
</feature>
<feature type="strand" evidence="9">
    <location>
        <begin position="291"/>
        <end position="295"/>
    </location>
</feature>
<feature type="helix" evidence="9">
    <location>
        <begin position="296"/>
        <end position="299"/>
    </location>
</feature>
<feature type="strand" evidence="9">
    <location>
        <begin position="310"/>
        <end position="319"/>
    </location>
</feature>
<feature type="strand" evidence="8">
    <location>
        <begin position="322"/>
        <end position="324"/>
    </location>
</feature>
<feature type="helix" evidence="9">
    <location>
        <begin position="333"/>
        <end position="353"/>
    </location>
</feature>
<feature type="strand" evidence="9">
    <location>
        <begin position="355"/>
        <end position="357"/>
    </location>
</feature>
<feature type="helix" evidence="9">
    <location>
        <begin position="359"/>
        <end position="363"/>
    </location>
</feature>
<feature type="helix" evidence="9">
    <location>
        <begin position="369"/>
        <end position="382"/>
    </location>
</feature>
<feature type="helix" evidence="9">
    <location>
        <begin position="384"/>
        <end position="390"/>
    </location>
</feature>
<protein>
    <recommendedName>
        <fullName evidence="4">UDP-galactopyranose mutase</fullName>
        <shortName>UGM</shortName>
        <ecNumber evidence="3">5.4.99.9</ecNumber>
    </recommendedName>
    <alternativeName>
        <fullName>UDP-GALP mutase</fullName>
    </alternativeName>
    <alternativeName>
        <fullName>Uridine 5-diphosphate galactopyranose mutase</fullName>
    </alternativeName>
</protein>
<proteinExistence type="evidence at protein level"/>
<accession>P9WIQ1</accession>
<accession>F2GDG8</accession>
<accession>L0TDM1</accession>
<accession>O06934</accession>
<accession>Q7ARQ0</accession>
<accession>Q7D4U3</accession>
<organism>
    <name type="scientific">Mycobacterium tuberculosis (strain ATCC 25618 / H37Rv)</name>
    <dbReference type="NCBI Taxonomy" id="83332"/>
    <lineage>
        <taxon>Bacteria</taxon>
        <taxon>Bacillati</taxon>
        <taxon>Actinomycetota</taxon>
        <taxon>Actinomycetes</taxon>
        <taxon>Mycobacteriales</taxon>
        <taxon>Mycobacteriaceae</taxon>
        <taxon>Mycobacterium</taxon>
        <taxon>Mycobacterium tuberculosis complex</taxon>
    </lineage>
</organism>
<keyword id="KW-0002">3D-structure</keyword>
<keyword id="KW-0961">Cell wall biogenesis/degradation</keyword>
<keyword id="KW-0274">FAD</keyword>
<keyword id="KW-0285">Flavoprotein</keyword>
<keyword id="KW-0413">Isomerase</keyword>
<keyword id="KW-1185">Reference proteome</keyword>
<reference key="1">
    <citation type="journal article" date="1997" name="Tuber. Lung Dis.">
        <title>Biosynthetic origin of mycobacterial cell wall galactofuranosyl residues.</title>
        <authorList>
            <person name="Weston A."/>
            <person name="Stern R.J."/>
            <person name="Lee R.E."/>
            <person name="Nassau P.M."/>
            <person name="Monsey D."/>
            <person name="Martin S.L."/>
            <person name="Scherman M.S."/>
            <person name="Besra G.S."/>
            <person name="Duncan K."/>
            <person name="McNeil M.R."/>
        </authorList>
    </citation>
    <scope>NUCLEOTIDE SEQUENCE [GENOMIC DNA]</scope>
    <scope>FUNCTION</scope>
    <scope>CATALYTIC ACTIVITY</scope>
    <source>
        <strain>ATCC 25618 / H37Rv</strain>
    </source>
</reference>
<reference key="2">
    <citation type="journal article" date="1998" name="Infect. Immun.">
        <title>Novel selection for isoniazid (INH) resistance genes supports a role for NAD+-binding proteins in mycobacterial INH resistance.</title>
        <authorList>
            <person name="Chen P."/>
            <person name="Bishai W.R."/>
        </authorList>
    </citation>
    <scope>NUCLEOTIDE SEQUENCE [GENOMIC DNA]</scope>
    <source>
        <strain>ATCC 25618 / H37Rv</strain>
    </source>
</reference>
<reference key="3">
    <citation type="journal article" date="1998" name="Nature">
        <title>Deciphering the biology of Mycobacterium tuberculosis from the complete genome sequence.</title>
        <authorList>
            <person name="Cole S.T."/>
            <person name="Brosch R."/>
            <person name="Parkhill J."/>
            <person name="Garnier T."/>
            <person name="Churcher C.M."/>
            <person name="Harris D.E."/>
            <person name="Gordon S.V."/>
            <person name="Eiglmeier K."/>
            <person name="Gas S."/>
            <person name="Barry C.E. III"/>
            <person name="Tekaia F."/>
            <person name="Badcock K."/>
            <person name="Basham D."/>
            <person name="Brown D."/>
            <person name="Chillingworth T."/>
            <person name="Connor R."/>
            <person name="Davies R.M."/>
            <person name="Devlin K."/>
            <person name="Feltwell T."/>
            <person name="Gentles S."/>
            <person name="Hamlin N."/>
            <person name="Holroyd S."/>
            <person name="Hornsby T."/>
            <person name="Jagels K."/>
            <person name="Krogh A."/>
            <person name="McLean J."/>
            <person name="Moule S."/>
            <person name="Murphy L.D."/>
            <person name="Oliver S."/>
            <person name="Osborne J."/>
            <person name="Quail M.A."/>
            <person name="Rajandream M.A."/>
            <person name="Rogers J."/>
            <person name="Rutter S."/>
            <person name="Seeger K."/>
            <person name="Skelton S."/>
            <person name="Squares S."/>
            <person name="Squares R."/>
            <person name="Sulston J.E."/>
            <person name="Taylor K."/>
            <person name="Whitehead S."/>
            <person name="Barrell B.G."/>
        </authorList>
    </citation>
    <scope>NUCLEOTIDE SEQUENCE [LARGE SCALE GENOMIC DNA]</scope>
    <source>
        <strain>ATCC 25618 / H37Rv</strain>
    </source>
</reference>
<reference key="4">
    <citation type="journal article" date="2011" name="Mol. Cell. Proteomics">
        <title>Proteogenomic analysis of Mycobacterium tuberculosis by high resolution mass spectrometry.</title>
        <authorList>
            <person name="Kelkar D.S."/>
            <person name="Kumar D."/>
            <person name="Kumar P."/>
            <person name="Balakrishnan L."/>
            <person name="Muthusamy B."/>
            <person name="Yadav A.K."/>
            <person name="Shrivastava P."/>
            <person name="Marimuthu A."/>
            <person name="Anand S."/>
            <person name="Sundaram H."/>
            <person name="Kingsbury R."/>
            <person name="Harsha H.C."/>
            <person name="Nair B."/>
            <person name="Prasad T.S."/>
            <person name="Chauhan D.S."/>
            <person name="Katoch K."/>
            <person name="Katoch V.M."/>
            <person name="Kumar P."/>
            <person name="Chaerkady R."/>
            <person name="Ramachandran S."/>
            <person name="Dash D."/>
            <person name="Pandey A."/>
        </authorList>
    </citation>
    <scope>IDENTIFICATION BY MASS SPECTROMETRY [LARGE SCALE ANALYSIS]</scope>
    <source>
        <strain>ATCC 25618 / H37Rv</strain>
    </source>
</reference>
<reference key="5">
    <citation type="journal article" date="2005" name="J. Mol. Biol.">
        <title>Crystal structures of Mycobacteria tuberculosis and Klebsiella pneumoniae UDP-galactopyranose mutase in the oxidised state and Klebsiella pneumoniae UDP-galactopyranose mutase in the (active) reduced state.</title>
        <authorList>
            <person name="Beis K."/>
            <person name="Srikannathasan V."/>
            <person name="Liu H."/>
            <person name="Fullerton S.W."/>
            <person name="Bamford V.A."/>
            <person name="Sanders D.A."/>
            <person name="Whitfield C."/>
            <person name="McNeil M.R."/>
            <person name="Naismith J.H."/>
        </authorList>
    </citation>
    <scope>X-RAY CRYSTALLOGRAPHY (2.25 ANGSTROMS) IN COMPLEX WITH FAD</scope>
    <scope>COFACTOR</scope>
    <scope>SUBUNIT</scope>
</reference>
<sequence length="399" mass="45814">MQPMTARFDLFVVGSGFFGLTIAERVATQLDKRVLVLERRPHIGGNAYSEAEPQTGIEVHKYGAHLFHTSNKRVWDYVRQFTDFTDYRHRVFAMHNGQAYQFPMGLGLVSQFFGKYFTPEQARQLIAEQAAEIDTADAQNLEEKAISLIGRPLYEAFVKGYTAKQWQTDPKELPAANITRLPVRYTFDNRYFSDTYEGLPTDGYTAWLQNMAADHRIEVRLNTDWFDVRGQLRPGSPAAPVVYTGPLDRYFDYAEGRLGWRTLDFEVEVLPIGDFQGTAVMNYNDLDVPYTRIHEFRHFHPERDYPTDKTVIMREYSRFAEDDDEPYYPINTEADRALLATYRARAKSETASSKVLFGGRLGTYQYLDMHMAIASALNMYDNVLAPHLRDGVPLLQDGA</sequence>
<comment type="function">
    <text evidence="3">Catalyzes the interconversion through a 2-keto intermediate of uridine diphosphogalactopyranose (UDP-GalP) into uridine diphosphogalactofuranose (UDP-GalF) which is a key building block for cell wall construction in Mycobacterium tuberculosis.</text>
</comment>
<comment type="catalytic activity">
    <reaction evidence="3">
        <text>UDP-alpha-D-galactose = UDP-alpha-D-galactofuranose</text>
        <dbReference type="Rhea" id="RHEA:24132"/>
        <dbReference type="ChEBI" id="CHEBI:66914"/>
        <dbReference type="ChEBI" id="CHEBI:66915"/>
        <dbReference type="EC" id="5.4.99.9"/>
    </reaction>
</comment>
<comment type="cofactor">
    <cofactor evidence="2">
        <name>FAD</name>
        <dbReference type="ChEBI" id="CHEBI:57692"/>
    </cofactor>
</comment>
<comment type="pathway">
    <text evidence="6">Cell wall biogenesis; cell wall polysaccharide biosynthesis.</text>
</comment>
<comment type="subunit">
    <text evidence="2">Homotetramer.</text>
</comment>
<comment type="similarity">
    <text evidence="5">Belongs to the UDP-galactopyranose/dTDP-fucopyranose mutase family.</text>
</comment>